<comment type="function">
    <text evidence="1">DNA-dependent RNA polymerase catalyzes the transcription of DNA into RNA using the four ribonucleoside triphosphates as substrates.</text>
</comment>
<comment type="catalytic activity">
    <reaction evidence="1">
        <text>RNA(n) + a ribonucleoside 5'-triphosphate = RNA(n+1) + diphosphate</text>
        <dbReference type="Rhea" id="RHEA:21248"/>
        <dbReference type="Rhea" id="RHEA-COMP:14527"/>
        <dbReference type="Rhea" id="RHEA-COMP:17342"/>
        <dbReference type="ChEBI" id="CHEBI:33019"/>
        <dbReference type="ChEBI" id="CHEBI:61557"/>
        <dbReference type="ChEBI" id="CHEBI:140395"/>
        <dbReference type="EC" id="2.7.7.6"/>
    </reaction>
</comment>
<comment type="cofactor">
    <cofactor evidence="1">
        <name>Zn(2+)</name>
        <dbReference type="ChEBI" id="CHEBI:29105"/>
    </cofactor>
    <text evidence="1">Binds 1 Zn(2+) ion per subunit.</text>
</comment>
<comment type="subunit">
    <text evidence="1">In plastids the minimal PEP RNA polymerase catalytic core is composed of four subunits: alpha, beta, beta', and beta''. When a (nuclear-encoded) sigma factor is associated with the core the holoenzyme is formed, which can initiate transcription.</text>
</comment>
<comment type="subcellular location">
    <subcellularLocation>
        <location evidence="1">Plastid</location>
        <location evidence="1">Chloroplast</location>
    </subcellularLocation>
</comment>
<comment type="RNA editing">
    <location>
        <position position="42" evidence="2 3"/>
    </location>
    <location>
        <position position="49" evidence="2 3"/>
    </location>
    <location>
        <position position="66" evidence="2 3"/>
    </location>
    <location>
        <position position="94" evidence="2 3"/>
    </location>
    <location>
        <position position="111" evidence="2 3"/>
    </location>
    <location>
        <position position="113" evidence="2 3"/>
    </location>
    <location>
        <position position="137" evidence="2 3"/>
    </location>
    <location>
        <position position="138" evidence="2 3"/>
    </location>
    <location>
        <position position="139" evidence="2 3"/>
    </location>
    <location>
        <position position="142" evidence="2 3"/>
    </location>
    <location>
        <position position="144" evidence="2 3"/>
    </location>
    <location>
        <position position="156" evidence="2 3"/>
    </location>
    <location>
        <position position="157" evidence="2 3"/>
    </location>
    <location>
        <position position="195" evidence="2 3"/>
    </location>
    <location>
        <position position="197" evidence="2 3"/>
    </location>
    <location>
        <position position="204" evidence="2 3"/>
    </location>
    <location>
        <position position="224" evidence="2 3"/>
    </location>
    <location>
        <position position="277" evidence="2 3"/>
    </location>
    <location>
        <position position="327" evidence="2 3"/>
    </location>
    <location>
        <position position="328" evidence="2 3"/>
    </location>
    <location>
        <position position="341" evidence="2 3"/>
    </location>
    <location>
        <position position="347" evidence="2 3"/>
    </location>
    <location>
        <position position="356" evidence="2 3"/>
    </location>
    <location>
        <position position="432" evidence="2 3"/>
    </location>
    <location>
        <position position="608" evidence="2 3"/>
    </location>
    <location>
        <position position="621" evidence="2 3"/>
    </location>
    <location>
        <position position="665" evidence="2 3"/>
    </location>
    <location>
        <position position="673" evidence="2 3"/>
    </location>
    <location>
        <position position="679" evidence="2 3"/>
    </location>
    <location>
        <position position="794" evidence="2 3"/>
    </location>
    <location>
        <position position="831" evidence="2 3"/>
    </location>
    <location>
        <position position="922" evidence="2 3"/>
    </location>
    <location>
        <position position="1179" evidence="2 3"/>
    </location>
    <location>
        <position position="1201" evidence="2 3"/>
    </location>
    <location>
        <position position="1206" evidence="2 3"/>
    </location>
    <location>
        <position position="1259" evidence="2 3"/>
    </location>
    <location>
        <position position="1260" evidence="2 3"/>
    </location>
    <location>
        <position position="1293" evidence="2 3"/>
    </location>
    <location>
        <position position="1311" evidence="2 3"/>
    </location>
    <location>
        <position position="1340" evidence="2 3"/>
    </location>
    <text>The nonsense codons at positions 49, 113, 137, 138, 156, 195, 224, 328, 356, 831, 922, 1201 and 1260 are modified to sense codons.</text>
</comment>
<comment type="similarity">
    <text evidence="1">Belongs to the RNA polymerase beta' chain family. RpoC2 subfamily.</text>
</comment>
<proteinExistence type="evidence at transcript level"/>
<sequence>MAESAKLLFYNKVIDGTAIKQFIGRLVAHFGITYTAHILDQLKTLGFQQATYAATSLGIDDLLTAPSKGWLIQDAEHHSYTLEKHHRYGNVHAVEKLRQLIETWYATSEYLKQEMNPNFRMTDPLNPVHMMSFSGARGSASQVHQLVGMRGLVSDPQGQIIDLPIKSNFREGLSLTEYIISCYGARKGVVDTAVRTSDAGYLTRRLVEVVQHIVVRKTDCNTFRGISLNSTEDKKKNLQIFTQQKLVGRVLADNLYINARCLAIRNQDINTNLIEKLITLKTPLISIRSPLTCKSMLWICQLCYGWSLTHYGDLVELGEAVGIIAGQSIGEPGTQLTLRTFHTGGVFTGDIAEHVRTPFNGTIEFDTDLVYPTRTRHGHPAWVCRTDLAVTIKSQNKIHNLIIPSQSLLLIQNNQYVESKQLIAEVHAKVSPFKEKVQKYIYCNIEGEMHWSKRVRHASKYLHSNVHLIFNTGHLWILSGSSHEDKTSSMFFKNQDQINTKFFISPRKILFMKKTNQVNSKNLDPYLEKEMETLNYSNLYLGILNKSRNFVYPSIILHDYEVKRIYDEKKGENFLLLEERHGEKKTQIFRRFVLNIPKSGILENKDIFAISNDPGYGIQSPGIIKYGTIKVNPIKGKGETFKNRETKILRLRPRYQVIEPGNFFPIPEEVHILYESFPPILVRNDSLIKKNTQITSDIRSQVGGLVRIRRKMNDSYEVKVLPGRVYHPEERRNISKQNDILVPPGEEISNKFQSENWLYLEWITPPKEKPFIFIRPAIEFIVPEETDLAETFTLNSQKKQEILKVKKIRYLLYEDGEEVEVTNKTGIQLIQTGLVLDWKEDSSIKKVYASLTEIETNGLSKKFLQISLIEHPIFEIEKKKNNVNLKYLFTNEINYSSHSFNYENGLFNGYRGIIRISSNENQEDKSLPILSPFDFVQIFLSKNSEEYTPEMKDEGNFNLDTNSIFYAKSFVKKFNQNSITSSQNSSGTFINKEFYNHNNINQEFNSRKIIRNFFLSIERNFMEILLLRKLGLLGNSHSLPSPFQFSCWANTHNQPIINRYSILENLRDVFQVPKWYFFDENKKTHKLDLSKNSIYHLLTWSFSIALSYEEGAIHLVGLGQFICENISISSKYQTISESGQIIAIHPEFLVVRLAKPSLATGGATIHSHYGQIIKKGDVLITLVYERLKSGDIIQGLPKVEQLLEARPINSTSINLENGFENWNRDMTKSLGSLWGFLLSAKTTMNQSQINLVDQIQEVYQSQGVYISDKHIEIVVRQMTSKVLTLEDGMANGFLPGELIESSRAQRMNRVLEESVLYKPILLGITKASLNTQSFISEASFQETTRVLAKAALRGRIDWLKGLKENVIFGGVISAGTGCQEVVWQVILEKRKETYSKRKKNKLFSGRVRDVFSYYQRILFFPTMKIIHKTLKKPLSEINLDPNYRK</sequence>
<organism>
    <name type="scientific">Anthoceros angustus</name>
    <name type="common">Hornwort</name>
    <name type="synonym">Anthoceros formosae</name>
    <dbReference type="NCBI Taxonomy" id="48387"/>
    <lineage>
        <taxon>Eukaryota</taxon>
        <taxon>Viridiplantae</taxon>
        <taxon>Streptophyta</taxon>
        <taxon>Embryophyta</taxon>
        <taxon>Anthocerotophyta</taxon>
        <taxon>Anthocerotopsida</taxon>
        <taxon>Anthocerotidae</taxon>
        <taxon>Anthocerotales</taxon>
        <taxon>Anthocerotaceae</taxon>
        <taxon>Anthoceros</taxon>
    </lineage>
</organism>
<feature type="chain" id="PRO_0000067913" description="DNA-directed RNA polymerase subunit beta''">
    <location>
        <begin position="1"/>
        <end position="1445"/>
    </location>
</feature>
<feature type="binding site" evidence="1">
    <location>
        <position position="220"/>
    </location>
    <ligand>
        <name>Zn(2+)</name>
        <dbReference type="ChEBI" id="CHEBI:29105"/>
    </ligand>
</feature>
<feature type="binding site" evidence="1">
    <location>
        <position position="293"/>
    </location>
    <ligand>
        <name>Zn(2+)</name>
        <dbReference type="ChEBI" id="CHEBI:29105"/>
    </ligand>
</feature>
<feature type="binding site" evidence="1">
    <location>
        <position position="300"/>
    </location>
    <ligand>
        <name>Zn(2+)</name>
        <dbReference type="ChEBI" id="CHEBI:29105"/>
    </ligand>
</feature>
<feature type="binding site" evidence="1">
    <location>
        <position position="303"/>
    </location>
    <ligand>
        <name>Zn(2+)</name>
        <dbReference type="ChEBI" id="CHEBI:29105"/>
    </ligand>
</feature>
<reference key="1">
    <citation type="journal article" date="2003" name="Nucleic Acids Res.">
        <title>The complete nucleotide sequence of the hornwort (Anthoceros formosae) chloroplast genome: insight into the earliest land plants.</title>
        <authorList>
            <person name="Kugita M."/>
            <person name="Kaneko A."/>
            <person name="Yamamoto Y."/>
            <person name="Takeya Y."/>
            <person name="Matsumoto T."/>
            <person name="Yoshinaga K."/>
        </authorList>
    </citation>
    <scope>NUCLEOTIDE SEQUENCE [LARGE SCALE GENOMIC DNA]</scope>
    <scope>RNA EDITING</scope>
</reference>
<reference key="2">
    <citation type="journal article" date="2003" name="Nucleic Acids Res.">
        <title>RNA editing in hornwort chloroplasts makes more than half the genes functional.</title>
        <authorList>
            <person name="Kugita M."/>
            <person name="Yamamoto Y."/>
            <person name="Fujikawa T."/>
            <person name="Matsumoto T."/>
            <person name="Yoshinaga K."/>
        </authorList>
    </citation>
    <scope>NUCLEOTIDE SEQUENCE [MRNA]</scope>
    <scope>RNA EDITING</scope>
    <source>
        <tissue>Thallus</tissue>
    </source>
</reference>
<protein>
    <recommendedName>
        <fullName evidence="1">DNA-directed RNA polymerase subunit beta''</fullName>
        <ecNumber evidence="1">2.7.7.6</ecNumber>
    </recommendedName>
    <alternativeName>
        <fullName evidence="1">PEP</fullName>
    </alternativeName>
    <alternativeName>
        <fullName evidence="1">Plastid-encoded RNA polymerase subunit beta''</fullName>
        <shortName evidence="1">RNA polymerase subunit beta''</shortName>
    </alternativeName>
</protein>
<geneLocation type="chloroplast"/>
<gene>
    <name evidence="1" type="primary">rpoC2</name>
</gene>
<dbReference type="EC" id="2.7.7.6" evidence="1"/>
<dbReference type="EMBL" id="AB086179">
    <property type="protein sequence ID" value="BAC55328.1"/>
    <property type="molecule type" value="Genomic_DNA"/>
</dbReference>
<dbReference type="EMBL" id="AB087420">
    <property type="protein sequence ID" value="BAC55419.1"/>
    <property type="molecule type" value="mRNA"/>
</dbReference>
<dbReference type="RefSeq" id="NP_777392.1">
    <property type="nucleotide sequence ID" value="NC_004543.1"/>
</dbReference>
<dbReference type="SMR" id="Q85C71"/>
<dbReference type="GeneID" id="2553425"/>
<dbReference type="GO" id="GO:0009507">
    <property type="term" value="C:chloroplast"/>
    <property type="evidence" value="ECO:0007669"/>
    <property type="project" value="UniProtKB-SubCell"/>
</dbReference>
<dbReference type="GO" id="GO:0000428">
    <property type="term" value="C:DNA-directed RNA polymerase complex"/>
    <property type="evidence" value="ECO:0007669"/>
    <property type="project" value="UniProtKB-KW"/>
</dbReference>
<dbReference type="GO" id="GO:0005739">
    <property type="term" value="C:mitochondrion"/>
    <property type="evidence" value="ECO:0007669"/>
    <property type="project" value="GOC"/>
</dbReference>
<dbReference type="GO" id="GO:0003677">
    <property type="term" value="F:DNA binding"/>
    <property type="evidence" value="ECO:0007669"/>
    <property type="project" value="UniProtKB-UniRule"/>
</dbReference>
<dbReference type="GO" id="GO:0003899">
    <property type="term" value="F:DNA-directed RNA polymerase activity"/>
    <property type="evidence" value="ECO:0007669"/>
    <property type="project" value="UniProtKB-UniRule"/>
</dbReference>
<dbReference type="GO" id="GO:0008270">
    <property type="term" value="F:zinc ion binding"/>
    <property type="evidence" value="ECO:0007669"/>
    <property type="project" value="UniProtKB-UniRule"/>
</dbReference>
<dbReference type="GO" id="GO:0006351">
    <property type="term" value="P:DNA-templated transcription"/>
    <property type="evidence" value="ECO:0007669"/>
    <property type="project" value="UniProtKB-UniRule"/>
</dbReference>
<dbReference type="CDD" id="cd02655">
    <property type="entry name" value="RNAP_beta'_C"/>
    <property type="match status" value="1"/>
</dbReference>
<dbReference type="Gene3D" id="1.10.132.30">
    <property type="match status" value="1"/>
</dbReference>
<dbReference type="Gene3D" id="1.10.150.390">
    <property type="match status" value="1"/>
</dbReference>
<dbReference type="Gene3D" id="1.10.1790.20">
    <property type="match status" value="1"/>
</dbReference>
<dbReference type="Gene3D" id="1.10.274.100">
    <property type="entry name" value="RNA polymerase Rpb1, domain 3"/>
    <property type="match status" value="1"/>
</dbReference>
<dbReference type="HAMAP" id="MF_01324">
    <property type="entry name" value="RNApol_bact_RpoC2"/>
    <property type="match status" value="1"/>
</dbReference>
<dbReference type="InterPro" id="IPR012756">
    <property type="entry name" value="DNA-dir_RpoC2_beta_pp"/>
</dbReference>
<dbReference type="InterPro" id="IPR050254">
    <property type="entry name" value="RNA_pol_beta''_euk"/>
</dbReference>
<dbReference type="InterPro" id="IPR042102">
    <property type="entry name" value="RNA_pol_Rpb1_3_sf"/>
</dbReference>
<dbReference type="InterPro" id="IPR007083">
    <property type="entry name" value="RNA_pol_Rpb1_4"/>
</dbReference>
<dbReference type="InterPro" id="IPR007081">
    <property type="entry name" value="RNA_pol_Rpb1_5"/>
</dbReference>
<dbReference type="InterPro" id="IPR038120">
    <property type="entry name" value="Rpb1_funnel_sf"/>
</dbReference>
<dbReference type="NCBIfam" id="TIGR02388">
    <property type="entry name" value="rpoC2_cyan"/>
    <property type="match status" value="1"/>
</dbReference>
<dbReference type="PANTHER" id="PTHR34995">
    <property type="entry name" value="DNA-DIRECTED RNA POLYMERASE SUBUNIT BETA"/>
    <property type="match status" value="1"/>
</dbReference>
<dbReference type="PANTHER" id="PTHR34995:SF1">
    <property type="entry name" value="DNA-DIRECTED RNA POLYMERASE SUBUNIT BETA"/>
    <property type="match status" value="1"/>
</dbReference>
<dbReference type="Pfam" id="PF05000">
    <property type="entry name" value="RNA_pol_Rpb1_4"/>
    <property type="match status" value="1"/>
</dbReference>
<dbReference type="Pfam" id="PF04998">
    <property type="entry name" value="RNA_pol_Rpb1_5"/>
    <property type="match status" value="2"/>
</dbReference>
<dbReference type="SUPFAM" id="SSF64484">
    <property type="entry name" value="beta and beta-prime subunits of DNA dependent RNA-polymerase"/>
    <property type="match status" value="1"/>
</dbReference>
<keyword id="KW-0150">Chloroplast</keyword>
<keyword id="KW-0240">DNA-directed RNA polymerase</keyword>
<keyword id="KW-0479">Metal-binding</keyword>
<keyword id="KW-0548">Nucleotidyltransferase</keyword>
<keyword id="KW-0934">Plastid</keyword>
<keyword id="KW-0691">RNA editing</keyword>
<keyword id="KW-0804">Transcription</keyword>
<keyword id="KW-0808">Transferase</keyword>
<keyword id="KW-0862">Zinc</keyword>
<evidence type="ECO:0000255" key="1">
    <source>
        <dbReference type="HAMAP-Rule" id="MF_01324"/>
    </source>
</evidence>
<evidence type="ECO:0000269" key="2">
    <source>
    </source>
</evidence>
<evidence type="ECO:0000269" key="3">
    <source>
    </source>
</evidence>
<name>RPOC2_ANTAG</name>
<accession>Q85C71</accession>